<gene>
    <name type="primary">cxgE</name>
    <name type="synonym">cox7e</name>
    <name type="ORF">DDB_G0277837</name>
</gene>
<dbReference type="EC" id="7.1.1.9"/>
<dbReference type="EMBL" id="X55673">
    <property type="protein sequence ID" value="CAA39208.1"/>
    <property type="molecule type" value="mRNA"/>
</dbReference>
<dbReference type="EMBL" id="X99344">
    <property type="protein sequence ID" value="CAA67724.1"/>
    <property type="molecule type" value="Genomic_DNA"/>
</dbReference>
<dbReference type="EMBL" id="AAFI02000023">
    <property type="protein sequence ID" value="EAL68091.1"/>
    <property type="molecule type" value="Genomic_DNA"/>
</dbReference>
<dbReference type="PIR" id="S13105">
    <property type="entry name" value="S13105"/>
</dbReference>
<dbReference type="RefSeq" id="XP_642042.1">
    <property type="nucleotide sequence ID" value="XM_636950.1"/>
</dbReference>
<dbReference type="SMR" id="P20609"/>
<dbReference type="FunCoup" id="P20609">
    <property type="interactions" value="82"/>
</dbReference>
<dbReference type="STRING" id="44689.P20609"/>
<dbReference type="PaxDb" id="44689-DDB0216179"/>
<dbReference type="EnsemblProtists" id="EAL68091">
    <property type="protein sequence ID" value="EAL68091"/>
    <property type="gene ID" value="DDB_G0277837"/>
</dbReference>
<dbReference type="GeneID" id="8621254"/>
<dbReference type="KEGG" id="ddi:DDB_G0277837"/>
<dbReference type="dictyBase" id="DDB_G0277837">
    <property type="gene designation" value="cxgE"/>
</dbReference>
<dbReference type="VEuPathDB" id="AmoebaDB:DDB_G0277837"/>
<dbReference type="HOGENOM" id="CLU_3072688_0_0_1"/>
<dbReference type="InParanoid" id="P20609"/>
<dbReference type="OMA" id="LIKMHIT"/>
<dbReference type="PRO" id="PR:P20609"/>
<dbReference type="Proteomes" id="UP000002195">
    <property type="component" value="Chromosome 3"/>
</dbReference>
<dbReference type="GO" id="GO:0005743">
    <property type="term" value="C:mitochondrial inner membrane"/>
    <property type="evidence" value="ECO:0007669"/>
    <property type="project" value="UniProtKB-SubCell"/>
</dbReference>
<dbReference type="GO" id="GO:0004129">
    <property type="term" value="F:cytochrome-c oxidase activity"/>
    <property type="evidence" value="ECO:0007669"/>
    <property type="project" value="UniProtKB-EC"/>
</dbReference>
<dbReference type="GO" id="GO:0006123">
    <property type="term" value="P:mitochondrial electron transport, cytochrome c to oxygen"/>
    <property type="evidence" value="ECO:0007669"/>
    <property type="project" value="InterPro"/>
</dbReference>
<dbReference type="GO" id="GO:0001666">
    <property type="term" value="P:response to hypoxia"/>
    <property type="evidence" value="ECO:0000314"/>
    <property type="project" value="dictyBase"/>
</dbReference>
<dbReference type="CDD" id="cd00927">
    <property type="entry name" value="CcO_VIc-like"/>
    <property type="match status" value="1"/>
</dbReference>
<dbReference type="InterPro" id="IPR004204">
    <property type="entry name" value="Cox7e/7s"/>
</dbReference>
<organism>
    <name type="scientific">Dictyostelium discoideum</name>
    <name type="common">Social amoeba</name>
    <dbReference type="NCBI Taxonomy" id="44689"/>
    <lineage>
        <taxon>Eukaryota</taxon>
        <taxon>Amoebozoa</taxon>
        <taxon>Evosea</taxon>
        <taxon>Eumycetozoa</taxon>
        <taxon>Dictyostelia</taxon>
        <taxon>Dictyosteliales</taxon>
        <taxon>Dictyosteliaceae</taxon>
        <taxon>Dictyostelium</taxon>
    </lineage>
</organism>
<evidence type="ECO:0000269" key="1">
    <source>
    </source>
</evidence>
<feature type="initiator methionine" description="Removed" evidence="1">
    <location>
        <position position="1"/>
    </location>
</feature>
<feature type="chain" id="PRO_0000183908" description="Cytochrome c oxidase subunit 7e">
    <location>
        <begin position="2"/>
        <end position="53"/>
    </location>
</feature>
<name>COXE_DICDI</name>
<protein>
    <recommendedName>
        <fullName>Cytochrome c oxidase subunit 7e</fullName>
        <ecNumber>7.1.1.9</ecNumber>
    </recommendedName>
    <alternativeName>
        <fullName>Cytochrome c oxidase polypeptide VIIe</fullName>
    </alternativeName>
</protein>
<reference key="1">
    <citation type="journal article" date="1990" name="Nucleic Acids Res.">
        <title>Nucleotide sequence of the cDNA encoding subunit VIIe of cytochrome c oxidase from the slime mold Dictyostelium discoideum.</title>
        <authorList>
            <person name="Rizzuto R."/>
            <person name="Sandona D."/>
            <person name="Capaldi R.A."/>
            <person name="Bisson R."/>
        </authorList>
    </citation>
    <scope>NUCLEOTIDE SEQUENCE [MRNA]</scope>
    <source>
        <strain>AX3</strain>
    </source>
</reference>
<reference key="2">
    <citation type="journal article" date="1997" name="EMBO J.">
        <title>Subunit change in cytochrome c oxidase: identification of the oxygen switch in Dictyostelium.</title>
        <authorList>
            <person name="Bisson R."/>
            <person name="Vettore S."/>
            <person name="Aratri E."/>
            <person name="Sandona D."/>
        </authorList>
    </citation>
    <scope>NUCLEOTIDE SEQUENCE [GENOMIC DNA]</scope>
    <source>
        <strain>AX3</strain>
    </source>
</reference>
<reference key="3">
    <citation type="journal article" date="2005" name="Nature">
        <title>The genome of the social amoeba Dictyostelium discoideum.</title>
        <authorList>
            <person name="Eichinger L."/>
            <person name="Pachebat J.A."/>
            <person name="Gloeckner G."/>
            <person name="Rajandream M.A."/>
            <person name="Sucgang R."/>
            <person name="Berriman M."/>
            <person name="Song J."/>
            <person name="Olsen R."/>
            <person name="Szafranski K."/>
            <person name="Xu Q."/>
            <person name="Tunggal B."/>
            <person name="Kummerfeld S."/>
            <person name="Madera M."/>
            <person name="Konfortov B.A."/>
            <person name="Rivero F."/>
            <person name="Bankier A.T."/>
            <person name="Lehmann R."/>
            <person name="Hamlin N."/>
            <person name="Davies R."/>
            <person name="Gaudet P."/>
            <person name="Fey P."/>
            <person name="Pilcher K."/>
            <person name="Chen G."/>
            <person name="Saunders D."/>
            <person name="Sodergren E.J."/>
            <person name="Davis P."/>
            <person name="Kerhornou A."/>
            <person name="Nie X."/>
            <person name="Hall N."/>
            <person name="Anjard C."/>
            <person name="Hemphill L."/>
            <person name="Bason N."/>
            <person name="Farbrother P."/>
            <person name="Desany B."/>
            <person name="Just E."/>
            <person name="Morio T."/>
            <person name="Rost R."/>
            <person name="Churcher C.M."/>
            <person name="Cooper J."/>
            <person name="Haydock S."/>
            <person name="van Driessche N."/>
            <person name="Cronin A."/>
            <person name="Goodhead I."/>
            <person name="Muzny D.M."/>
            <person name="Mourier T."/>
            <person name="Pain A."/>
            <person name="Lu M."/>
            <person name="Harper D."/>
            <person name="Lindsay R."/>
            <person name="Hauser H."/>
            <person name="James K.D."/>
            <person name="Quiles M."/>
            <person name="Madan Babu M."/>
            <person name="Saito T."/>
            <person name="Buchrieser C."/>
            <person name="Wardroper A."/>
            <person name="Felder M."/>
            <person name="Thangavelu M."/>
            <person name="Johnson D."/>
            <person name="Knights A."/>
            <person name="Loulseged H."/>
            <person name="Mungall K.L."/>
            <person name="Oliver K."/>
            <person name="Price C."/>
            <person name="Quail M.A."/>
            <person name="Urushihara H."/>
            <person name="Hernandez J."/>
            <person name="Rabbinowitsch E."/>
            <person name="Steffen D."/>
            <person name="Sanders M."/>
            <person name="Ma J."/>
            <person name="Kohara Y."/>
            <person name="Sharp S."/>
            <person name="Simmonds M.N."/>
            <person name="Spiegler S."/>
            <person name="Tivey A."/>
            <person name="Sugano S."/>
            <person name="White B."/>
            <person name="Walker D."/>
            <person name="Woodward J.R."/>
            <person name="Winckler T."/>
            <person name="Tanaka Y."/>
            <person name="Shaulsky G."/>
            <person name="Schleicher M."/>
            <person name="Weinstock G.M."/>
            <person name="Rosenthal A."/>
            <person name="Cox E.C."/>
            <person name="Chisholm R.L."/>
            <person name="Gibbs R.A."/>
            <person name="Loomis W.F."/>
            <person name="Platzer M."/>
            <person name="Kay R.R."/>
            <person name="Williams J.G."/>
            <person name="Dear P.H."/>
            <person name="Noegel A.A."/>
            <person name="Barrell B.G."/>
            <person name="Kuspa A."/>
        </authorList>
    </citation>
    <scope>NUCLEOTIDE SEQUENCE [LARGE SCALE GENOMIC DNA]</scope>
    <source>
        <strain>AX4</strain>
    </source>
</reference>
<reference key="4">
    <citation type="journal article" date="1990" name="FEBS Lett.">
        <title>The two oxygen-regulated subunits of cytochrome c oxidase in Dictyostelium discoideum derive from a common ancestor.</title>
        <authorList>
            <person name="Capaldi R.A."/>
            <person name="Zhang Y.-Z."/>
            <person name="Rizzuto R."/>
            <person name="Sandona D."/>
            <person name="Schiavo G."/>
            <person name="Bisson R."/>
        </authorList>
    </citation>
    <scope>PROTEIN SEQUENCE OF 2-35</scope>
</reference>
<comment type="function">
    <text>This protein is one of the nuclear-coded polypeptide chains of cytochrome c oxidase, the terminal oxidase in mitochondrial electron transport.</text>
</comment>
<comment type="catalytic activity">
    <reaction>
        <text>4 Fe(II)-[cytochrome c] + O2 + 8 H(+)(in) = 4 Fe(III)-[cytochrome c] + 2 H2O + 4 H(+)(out)</text>
        <dbReference type="Rhea" id="RHEA:11436"/>
        <dbReference type="Rhea" id="RHEA-COMP:10350"/>
        <dbReference type="Rhea" id="RHEA-COMP:14399"/>
        <dbReference type="ChEBI" id="CHEBI:15377"/>
        <dbReference type="ChEBI" id="CHEBI:15378"/>
        <dbReference type="ChEBI" id="CHEBI:15379"/>
        <dbReference type="ChEBI" id="CHEBI:29033"/>
        <dbReference type="ChEBI" id="CHEBI:29034"/>
        <dbReference type="EC" id="7.1.1.9"/>
    </reaction>
</comment>
<comment type="subunit">
    <text>Slime mold cytochrome c oxidase consists of at least seven different polypeptides species, subunits I, II, III, IV, V, VI, and VIIe/s in order of MW.</text>
</comment>
<comment type="subcellular location">
    <subcellularLocation>
        <location>Mitochondrion inner membrane</location>
    </subcellularLocation>
</comment>
<comment type="developmental stage">
    <text>When cells enter the stationary phase of growth, during the vegetative state, subunit VIIe is replaced by VIIs. The switching depends on the oxygen tension.</text>
</comment>
<proteinExistence type="evidence at protein level"/>
<accession>P20609</accession>
<accession>Q54Z10</accession>
<sequence length="53" mass="6110">MSHALPALIKMHITKDIGYGLLLGIIPGVWFKYQIGQSIQKREDFYAAYDKRN</sequence>
<keyword id="KW-0903">Direct protein sequencing</keyword>
<keyword id="KW-0472">Membrane</keyword>
<keyword id="KW-0496">Mitochondrion</keyword>
<keyword id="KW-0999">Mitochondrion inner membrane</keyword>
<keyword id="KW-1185">Reference proteome</keyword>
<keyword id="KW-1278">Translocase</keyword>